<sequence>MVEDSQETTHFGFQTVAKEQKADMVAHVFHSVASKYDVMNDLMSFGIHRLWKRFTIDCSGVRRGQTVLDLAGGTGDLTAKFSRMVGETGKVILADINDSMLKMGREKLRNIGVIGNVEYVQANAEALPFPDNTFDCITISFGLRNVTEKEKALRSMFRVLKPGGRLLVLEFSKPIIEPLSKAYDAYSFHILPRIGSMVANDADSYRYLAESIRMHPDQDTLKAMMQDAGFESVDYYNLTAGVVALHRGYKF</sequence>
<proteinExistence type="inferred from homology"/>
<protein>
    <recommendedName>
        <fullName evidence="1">Ubiquinone/menaquinone biosynthesis C-methyltransferase UbiE</fullName>
        <ecNumber evidence="1">2.1.1.163</ecNumber>
        <ecNumber evidence="1">2.1.1.201</ecNumber>
    </recommendedName>
    <alternativeName>
        <fullName evidence="1">2-methoxy-6-polyprenyl-1,4-benzoquinol methylase</fullName>
    </alternativeName>
    <alternativeName>
        <fullName evidence="1">Demethylmenaquinone methyltransferase</fullName>
    </alternativeName>
</protein>
<gene>
    <name evidence="1" type="primary">ubiE</name>
    <name type="ordered locus">SSPA3549</name>
</gene>
<feature type="chain" id="PRO_1000187809" description="Ubiquinone/menaquinone biosynthesis C-methyltransferase UbiE">
    <location>
        <begin position="1"/>
        <end position="251"/>
    </location>
</feature>
<feature type="binding site" evidence="1">
    <location>
        <position position="74"/>
    </location>
    <ligand>
        <name>S-adenosyl-L-methionine</name>
        <dbReference type="ChEBI" id="CHEBI:59789"/>
    </ligand>
</feature>
<feature type="binding site" evidence="1">
    <location>
        <position position="95"/>
    </location>
    <ligand>
        <name>S-adenosyl-L-methionine</name>
        <dbReference type="ChEBI" id="CHEBI:59789"/>
    </ligand>
</feature>
<feature type="binding site" evidence="1">
    <location>
        <begin position="123"/>
        <end position="124"/>
    </location>
    <ligand>
        <name>S-adenosyl-L-methionine</name>
        <dbReference type="ChEBI" id="CHEBI:59789"/>
    </ligand>
</feature>
<feature type="binding site" evidence="1">
    <location>
        <position position="140"/>
    </location>
    <ligand>
        <name>S-adenosyl-L-methionine</name>
        <dbReference type="ChEBI" id="CHEBI:59789"/>
    </ligand>
</feature>
<comment type="function">
    <text evidence="1">Methyltransferase required for the conversion of demethylmenaquinol (DMKH2) to menaquinol (MKH2) and the conversion of 2-polyprenyl-6-methoxy-1,4-benzoquinol (DDMQH2) to 2-polyprenyl-3-methyl-6-methoxy-1,4-benzoquinol (DMQH2).</text>
</comment>
<comment type="catalytic activity">
    <reaction evidence="1">
        <text>a 2-demethylmenaquinol + S-adenosyl-L-methionine = a menaquinol + S-adenosyl-L-homocysteine + H(+)</text>
        <dbReference type="Rhea" id="RHEA:42640"/>
        <dbReference type="Rhea" id="RHEA-COMP:9539"/>
        <dbReference type="Rhea" id="RHEA-COMP:9563"/>
        <dbReference type="ChEBI" id="CHEBI:15378"/>
        <dbReference type="ChEBI" id="CHEBI:18151"/>
        <dbReference type="ChEBI" id="CHEBI:55437"/>
        <dbReference type="ChEBI" id="CHEBI:57856"/>
        <dbReference type="ChEBI" id="CHEBI:59789"/>
        <dbReference type="EC" id="2.1.1.163"/>
    </reaction>
</comment>
<comment type="catalytic activity">
    <reaction evidence="1">
        <text>a 2-methoxy-6-(all-trans-polyprenyl)benzene-1,4-diol + S-adenosyl-L-methionine = a 5-methoxy-2-methyl-3-(all-trans-polyprenyl)benzene-1,4-diol + S-adenosyl-L-homocysteine + H(+)</text>
        <dbReference type="Rhea" id="RHEA:28286"/>
        <dbReference type="Rhea" id="RHEA-COMP:10858"/>
        <dbReference type="Rhea" id="RHEA-COMP:10859"/>
        <dbReference type="ChEBI" id="CHEBI:15378"/>
        <dbReference type="ChEBI" id="CHEBI:57856"/>
        <dbReference type="ChEBI" id="CHEBI:59789"/>
        <dbReference type="ChEBI" id="CHEBI:84166"/>
        <dbReference type="ChEBI" id="CHEBI:84167"/>
        <dbReference type="EC" id="2.1.1.201"/>
    </reaction>
</comment>
<comment type="pathway">
    <text evidence="1">Quinol/quinone metabolism; menaquinone biosynthesis; menaquinol from 1,4-dihydroxy-2-naphthoate: step 2/2.</text>
</comment>
<comment type="pathway">
    <text evidence="1">Cofactor biosynthesis; ubiquinone biosynthesis.</text>
</comment>
<comment type="similarity">
    <text evidence="1">Belongs to the class I-like SAM-binding methyltransferase superfamily. MenG/UbiE family.</text>
</comment>
<evidence type="ECO:0000255" key="1">
    <source>
        <dbReference type="HAMAP-Rule" id="MF_01813"/>
    </source>
</evidence>
<organism>
    <name type="scientific">Salmonella paratyphi A (strain AKU_12601)</name>
    <dbReference type="NCBI Taxonomy" id="554290"/>
    <lineage>
        <taxon>Bacteria</taxon>
        <taxon>Pseudomonadati</taxon>
        <taxon>Pseudomonadota</taxon>
        <taxon>Gammaproteobacteria</taxon>
        <taxon>Enterobacterales</taxon>
        <taxon>Enterobacteriaceae</taxon>
        <taxon>Salmonella</taxon>
    </lineage>
</organism>
<dbReference type="EC" id="2.1.1.163" evidence="1"/>
<dbReference type="EC" id="2.1.1.201" evidence="1"/>
<dbReference type="EMBL" id="FM200053">
    <property type="protein sequence ID" value="CAR61828.1"/>
    <property type="molecule type" value="Genomic_DNA"/>
</dbReference>
<dbReference type="RefSeq" id="WP_000229009.1">
    <property type="nucleotide sequence ID" value="NC_011147.1"/>
</dbReference>
<dbReference type="SMR" id="B5BIX9"/>
<dbReference type="KEGG" id="sek:SSPA3549"/>
<dbReference type="HOGENOM" id="CLU_037990_0_0_6"/>
<dbReference type="UniPathway" id="UPA00079">
    <property type="reaction ID" value="UER00169"/>
</dbReference>
<dbReference type="UniPathway" id="UPA00232"/>
<dbReference type="Proteomes" id="UP000001869">
    <property type="component" value="Chromosome"/>
</dbReference>
<dbReference type="GO" id="GO:0008425">
    <property type="term" value="F:2-methoxy-6-polyprenyl-1,4-benzoquinol methyltransferase activity"/>
    <property type="evidence" value="ECO:0007669"/>
    <property type="project" value="UniProtKB-UniRule"/>
</dbReference>
<dbReference type="GO" id="GO:0043770">
    <property type="term" value="F:demethylmenaquinone methyltransferase activity"/>
    <property type="evidence" value="ECO:0007669"/>
    <property type="project" value="UniProtKB-UniRule"/>
</dbReference>
<dbReference type="GO" id="GO:0009060">
    <property type="term" value="P:aerobic respiration"/>
    <property type="evidence" value="ECO:0007669"/>
    <property type="project" value="UniProtKB-UniRule"/>
</dbReference>
<dbReference type="GO" id="GO:0009234">
    <property type="term" value="P:menaquinone biosynthetic process"/>
    <property type="evidence" value="ECO:0007669"/>
    <property type="project" value="UniProtKB-UniRule"/>
</dbReference>
<dbReference type="GO" id="GO:0032259">
    <property type="term" value="P:methylation"/>
    <property type="evidence" value="ECO:0007669"/>
    <property type="project" value="UniProtKB-KW"/>
</dbReference>
<dbReference type="CDD" id="cd02440">
    <property type="entry name" value="AdoMet_MTases"/>
    <property type="match status" value="1"/>
</dbReference>
<dbReference type="FunFam" id="3.40.50.150:FF:000014">
    <property type="entry name" value="Ubiquinone/menaquinone biosynthesis C-methyltransferase UbiE"/>
    <property type="match status" value="1"/>
</dbReference>
<dbReference type="Gene3D" id="3.40.50.150">
    <property type="entry name" value="Vaccinia Virus protein VP39"/>
    <property type="match status" value="1"/>
</dbReference>
<dbReference type="HAMAP" id="MF_01813">
    <property type="entry name" value="MenG_UbiE_methyltr"/>
    <property type="match status" value="1"/>
</dbReference>
<dbReference type="InterPro" id="IPR029063">
    <property type="entry name" value="SAM-dependent_MTases_sf"/>
</dbReference>
<dbReference type="InterPro" id="IPR004033">
    <property type="entry name" value="UbiE/COQ5_MeTrFase"/>
</dbReference>
<dbReference type="InterPro" id="IPR023576">
    <property type="entry name" value="UbiE/COQ5_MeTrFase_CS"/>
</dbReference>
<dbReference type="NCBIfam" id="TIGR01934">
    <property type="entry name" value="MenG_MenH_UbiE"/>
    <property type="match status" value="1"/>
</dbReference>
<dbReference type="NCBIfam" id="NF001240">
    <property type="entry name" value="PRK00216.1-1"/>
    <property type="match status" value="1"/>
</dbReference>
<dbReference type="NCBIfam" id="NF001242">
    <property type="entry name" value="PRK00216.1-3"/>
    <property type="match status" value="1"/>
</dbReference>
<dbReference type="NCBIfam" id="NF001244">
    <property type="entry name" value="PRK00216.1-5"/>
    <property type="match status" value="1"/>
</dbReference>
<dbReference type="PANTHER" id="PTHR43591:SF24">
    <property type="entry name" value="2-METHOXY-6-POLYPRENYL-1,4-BENZOQUINOL METHYLASE, MITOCHONDRIAL"/>
    <property type="match status" value="1"/>
</dbReference>
<dbReference type="PANTHER" id="PTHR43591">
    <property type="entry name" value="METHYLTRANSFERASE"/>
    <property type="match status" value="1"/>
</dbReference>
<dbReference type="Pfam" id="PF01209">
    <property type="entry name" value="Ubie_methyltran"/>
    <property type="match status" value="1"/>
</dbReference>
<dbReference type="SUPFAM" id="SSF53335">
    <property type="entry name" value="S-adenosyl-L-methionine-dependent methyltransferases"/>
    <property type="match status" value="1"/>
</dbReference>
<dbReference type="PROSITE" id="PS51608">
    <property type="entry name" value="SAM_MT_UBIE"/>
    <property type="match status" value="1"/>
</dbReference>
<dbReference type="PROSITE" id="PS01183">
    <property type="entry name" value="UBIE_1"/>
    <property type="match status" value="1"/>
</dbReference>
<dbReference type="PROSITE" id="PS01184">
    <property type="entry name" value="UBIE_2"/>
    <property type="match status" value="1"/>
</dbReference>
<keyword id="KW-0474">Menaquinone biosynthesis</keyword>
<keyword id="KW-0489">Methyltransferase</keyword>
<keyword id="KW-0949">S-adenosyl-L-methionine</keyword>
<keyword id="KW-0808">Transferase</keyword>
<keyword id="KW-0831">Ubiquinone biosynthesis</keyword>
<name>UBIE_SALPK</name>
<reference key="1">
    <citation type="journal article" date="2009" name="BMC Genomics">
        <title>Pseudogene accumulation in the evolutionary histories of Salmonella enterica serovars Paratyphi A and Typhi.</title>
        <authorList>
            <person name="Holt K.E."/>
            <person name="Thomson N.R."/>
            <person name="Wain J."/>
            <person name="Langridge G.C."/>
            <person name="Hasan R."/>
            <person name="Bhutta Z.A."/>
            <person name="Quail M.A."/>
            <person name="Norbertczak H."/>
            <person name="Walker D."/>
            <person name="Simmonds M."/>
            <person name="White B."/>
            <person name="Bason N."/>
            <person name="Mungall K."/>
            <person name="Dougan G."/>
            <person name="Parkhill J."/>
        </authorList>
    </citation>
    <scope>NUCLEOTIDE SEQUENCE [LARGE SCALE GENOMIC DNA]</scope>
    <source>
        <strain>AKU_12601</strain>
    </source>
</reference>
<accession>B5BIX9</accession>